<sequence>MPLYSQIRQSEDAFSEPTYAATNELINDNENACPHCRQERSESWFLKGGRSIVYVSLTFFVVSIGLNFILAILLYSKFHASSFQTEWSAAVADTDCVRRLVAYTPALDSIEYFATNLRDAYRSNDQYLGPPTKEREQMWQDLWLHEAIMVETWAMPLLNRINLDPYEKVEGELGDGYNALLQVHHQLGCLDILRQYTWLLSGKYTTDGIPVPIFLQKPPEENRRHVDQCIEELRMGLMCHGDMTPLLITKKRDGASGFKADMNTHYMCRNFTKLQEWTMSHGVEHWELGDGRGPHEHGRR</sequence>
<comment type="function">
    <text evidence="4 5 9">Transacylase; part of the gene cluster that mediates the biosynthesis of the mycotoxin cyclochlorotine, a hepatotoxic and carcinogenic cyclic chlorinated pentapeptide (PubMed:26954535, PubMed:33736433). Within the pathway, cctO catalyzes the intramolecular O,N-transacylation from isocyclochlorotine to cyclochlorotine (PubMed:33736433). The NRPS cctN initially catalyzes the condensation of L-serine (Ser), Pro, L-2-aminobutyrate (2Abu), Ser, and beta-Phe in this order to produce isocyclotine. After the dichlorination of Pro2 catalyzed by cctP2 to produce isocyclochlorotine, the cctO-mediated transacylation of isocyclochlorotine can furnish cyclochlorotine. The subsequent hydroxylation of cyclochlorotine by cctR yields hydroxycyclochlorotine as the final product. CctP1 probably acts as a phenylalanine aminomutase and provides the uncommon building block beta-Phe. Furthermore, 2Abu can be synthesized from threonine by one of the threonine dehydratases and transaminases localized outside of the cluster. The functions of the remaining proteins encoded by the cluster, cctM and cctT, have not been identified yet (Probable) (PubMed:33736433).</text>
</comment>
<comment type="pathway">
    <text evidence="5">Mycotoxin biosynthesis.</text>
</comment>
<comment type="subcellular location">
    <subcellularLocation>
        <location evidence="2">Membrane</location>
        <topology evidence="2">Single-pass membrane protein</topology>
    </subcellularLocation>
</comment>
<comment type="domain">
    <text evidence="1 8">The 2 HXXHC motifs are conserved in ustYa family proteins and might form active sites (By similarity). Within cctO however, the second His from the 2 motifs is not conserved (Probable).</text>
</comment>
<comment type="disruption phenotype">
    <text evidence="5">Leads to the accumulation of isocyclochlorotine.</text>
</comment>
<comment type="similarity">
    <text evidence="8">Belongs to the ustYa family.</text>
</comment>
<feature type="chain" id="PRO_0000438667" description="Transacylase cctO">
    <location>
        <begin position="1"/>
        <end position="300"/>
    </location>
</feature>
<feature type="transmembrane region" description="Helical" evidence="2">
    <location>
        <begin position="52"/>
        <end position="72"/>
    </location>
</feature>
<feature type="short sequence motif" description="HXXHC 1" evidence="1">
    <location>
        <begin position="185"/>
        <end position="189"/>
    </location>
</feature>
<feature type="short sequence motif" description="HXXHC 2" evidence="1">
    <location>
        <begin position="225"/>
        <end position="229"/>
    </location>
</feature>
<feature type="glycosylation site" description="N-linked (GlcNAc...) asparagine" evidence="3">
    <location>
        <position position="270"/>
    </location>
</feature>
<organism>
    <name type="scientific">Talaromyces islandicus</name>
    <name type="common">Penicillium islandicum</name>
    <dbReference type="NCBI Taxonomy" id="28573"/>
    <lineage>
        <taxon>Eukaryota</taxon>
        <taxon>Fungi</taxon>
        <taxon>Dikarya</taxon>
        <taxon>Ascomycota</taxon>
        <taxon>Pezizomycotina</taxon>
        <taxon>Eurotiomycetes</taxon>
        <taxon>Eurotiomycetidae</taxon>
        <taxon>Eurotiales</taxon>
        <taxon>Trichocomaceae</taxon>
        <taxon>Talaromyces</taxon>
        <taxon>Talaromyces sect. Islandici</taxon>
    </lineage>
</organism>
<proteinExistence type="evidence at protein level"/>
<dbReference type="EC" id="2.3.1.-" evidence="5"/>
<dbReference type="EMBL" id="CVMT01000002">
    <property type="protein sequence ID" value="CRG85573.1"/>
    <property type="molecule type" value="Genomic_DNA"/>
</dbReference>
<dbReference type="STRING" id="28573.A0A0U1LQF6"/>
<dbReference type="GlyCosmos" id="A0A0U1LQF6">
    <property type="glycosylation" value="1 site, No reported glycans"/>
</dbReference>
<dbReference type="OMA" id="HEAIMVE"/>
<dbReference type="OrthoDB" id="3687641at2759"/>
<dbReference type="Proteomes" id="UP000054383">
    <property type="component" value="Unassembled WGS sequence"/>
</dbReference>
<dbReference type="GO" id="GO:0016020">
    <property type="term" value="C:membrane"/>
    <property type="evidence" value="ECO:0007669"/>
    <property type="project" value="UniProtKB-SubCell"/>
</dbReference>
<dbReference type="GO" id="GO:0016740">
    <property type="term" value="F:transferase activity"/>
    <property type="evidence" value="ECO:0007669"/>
    <property type="project" value="UniProtKB-KW"/>
</dbReference>
<dbReference type="GO" id="GO:0043386">
    <property type="term" value="P:mycotoxin biosynthetic process"/>
    <property type="evidence" value="ECO:0007669"/>
    <property type="project" value="InterPro"/>
</dbReference>
<dbReference type="InterPro" id="IPR021765">
    <property type="entry name" value="UstYa-like"/>
</dbReference>
<dbReference type="PANTHER" id="PTHR33365:SF4">
    <property type="entry name" value="CYCLOCHLOROTINE BIOSYNTHESIS PROTEIN O"/>
    <property type="match status" value="1"/>
</dbReference>
<dbReference type="PANTHER" id="PTHR33365">
    <property type="entry name" value="YALI0B05434P"/>
    <property type="match status" value="1"/>
</dbReference>
<dbReference type="Pfam" id="PF11807">
    <property type="entry name" value="UstYa"/>
    <property type="match status" value="1"/>
</dbReference>
<reference key="1">
    <citation type="journal article" date="2015" name="J. Biotechnol.">
        <title>Draft genome sequence of Talaromyces islandicus ('Penicillium islandicum') WF-38-12, a neglected mold with significant biotechnological potential.</title>
        <authorList>
            <person name="Schafhauser T."/>
            <person name="Wibberg D."/>
            <person name="Rueckert C."/>
            <person name="Winkler A."/>
            <person name="Flor L."/>
            <person name="van Pee K.-H."/>
            <person name="Fewer D.P."/>
            <person name="Sivonen K."/>
            <person name="Jahn L."/>
            <person name="Ludwig-Mueller J."/>
            <person name="Caradec T."/>
            <person name="Jacques P."/>
            <person name="Huijbers M.M.E."/>
            <person name="van Berkel W.J.H."/>
            <person name="Weber T."/>
            <person name="Wohlleben W."/>
            <person name="Kalinowski J."/>
        </authorList>
    </citation>
    <scope>NUCLEOTIDE SEQUENCE [LARGE SCALE GENOMIC DNA]</scope>
    <source>
        <strain>ATCC 26535 / WF-38-12</strain>
    </source>
</reference>
<reference key="2">
    <citation type="journal article" date="2016" name="Environ. Microbiol.">
        <title>The cyclochlorotine mycotoxin is produced by the nonribosomal peptide synthetase CctN in Talaromyces islandicus ('Penicillium islandicum').</title>
        <authorList>
            <person name="Schafhauser T."/>
            <person name="Kirchner N."/>
            <person name="Kulik A."/>
            <person name="Huijbers M.M."/>
            <person name="Flor L."/>
            <person name="Caradec T."/>
            <person name="Fewer D.P."/>
            <person name="Gross H."/>
            <person name="Jacques P."/>
            <person name="Jahn L."/>
            <person name="Jokela J."/>
            <person name="Leclere V."/>
            <person name="Ludwig-Mueller J."/>
            <person name="Sivonen K."/>
            <person name="van Berkel W.J."/>
            <person name="Weber T."/>
            <person name="Wohlleben W."/>
            <person name="van Pee K.H."/>
        </authorList>
    </citation>
    <scope>FUNCTION</scope>
</reference>
<reference key="3">
    <citation type="journal article" date="2021" name="Org. Lett.">
        <title>Biosynthesis of cyclochlorotine: identification of the genes involved in oxidative transformations and intramolecular O,N-transacylation.</title>
        <authorList>
            <person name="Jiang Y."/>
            <person name="Ozaki T."/>
            <person name="Liu C."/>
            <person name="Igarashi Y."/>
            <person name="Ye Y."/>
            <person name="Tang S."/>
            <person name="Ye T."/>
            <person name="Maruyama J.I."/>
            <person name="Minami A."/>
            <person name="Oikawa H."/>
        </authorList>
    </citation>
    <scope>FUNCTION</scope>
    <scope>DISRUPTION PHENOTYPE</scope>
    <scope>CATALYTIC ACTIVITY</scope>
    <scope>PATHWAY</scope>
</reference>
<accession>A0A0U1LQF6</accession>
<name>CCTO_TALIS</name>
<gene>
    <name evidence="6" type="primary">cctO</name>
    <name type="ORF">PISL3812_02620</name>
</gene>
<evidence type="ECO:0000250" key="1">
    <source>
        <dbReference type="UniProtKB" id="B8NM67"/>
    </source>
</evidence>
<evidence type="ECO:0000255" key="2"/>
<evidence type="ECO:0000255" key="3">
    <source>
        <dbReference type="PROSITE-ProRule" id="PRU00498"/>
    </source>
</evidence>
<evidence type="ECO:0000269" key="4">
    <source>
    </source>
</evidence>
<evidence type="ECO:0000269" key="5">
    <source>
    </source>
</evidence>
<evidence type="ECO:0000303" key="6">
    <source>
    </source>
</evidence>
<evidence type="ECO:0000303" key="7">
    <source>
    </source>
</evidence>
<evidence type="ECO:0000305" key="8"/>
<evidence type="ECO:0000305" key="9">
    <source>
    </source>
</evidence>
<protein>
    <recommendedName>
        <fullName evidence="7">Transacylase cctO</fullName>
        <ecNumber evidence="5">2.3.1.-</ecNumber>
    </recommendedName>
    <alternativeName>
        <fullName evidence="6">Cyclochlorotine biosynthesis protein O</fullName>
    </alternativeName>
</protein>
<keyword id="KW-0325">Glycoprotein</keyword>
<keyword id="KW-0472">Membrane</keyword>
<keyword id="KW-1185">Reference proteome</keyword>
<keyword id="KW-0808">Transferase</keyword>
<keyword id="KW-0812">Transmembrane</keyword>
<keyword id="KW-1133">Transmembrane helix</keyword>